<protein>
    <recommendedName>
        <fullName>COX assembly mitochondrial protein homolog</fullName>
        <shortName>Cmc1p</shortName>
    </recommendedName>
</protein>
<dbReference type="EMBL" id="CR749370">
    <property type="protein sequence ID" value="CAH18223.1"/>
    <property type="molecule type" value="mRNA"/>
</dbReference>
<dbReference type="EMBL" id="CH471055">
    <property type="protein sequence ID" value="EAW64390.1"/>
    <property type="molecule type" value="Genomic_DNA"/>
</dbReference>
<dbReference type="EMBL" id="BC052644">
    <property type="protein sequence ID" value="AAH52644.1"/>
    <property type="molecule type" value="mRNA"/>
</dbReference>
<dbReference type="CCDS" id="CCDS33722.1"/>
<dbReference type="RefSeq" id="NP_872329.1">
    <property type="nucleotide sequence ID" value="NM_182523.2"/>
</dbReference>
<dbReference type="SMR" id="Q7Z7K0"/>
<dbReference type="BioGRID" id="127426">
    <property type="interactions" value="12"/>
</dbReference>
<dbReference type="CORUM" id="Q7Z7K0"/>
<dbReference type="FunCoup" id="Q7Z7K0">
    <property type="interactions" value="532"/>
</dbReference>
<dbReference type="IntAct" id="Q7Z7K0">
    <property type="interactions" value="8"/>
</dbReference>
<dbReference type="MINT" id="Q7Z7K0"/>
<dbReference type="STRING" id="9606.ENSP00000418348"/>
<dbReference type="GlyGen" id="Q7Z7K0">
    <property type="glycosylation" value="1 site, 1 O-linked glycan (1 site)"/>
</dbReference>
<dbReference type="iPTMnet" id="Q7Z7K0"/>
<dbReference type="PhosphoSitePlus" id="Q7Z7K0"/>
<dbReference type="BioMuta" id="CMC1"/>
<dbReference type="DMDM" id="74738888"/>
<dbReference type="jPOST" id="Q7Z7K0"/>
<dbReference type="MassIVE" id="Q7Z7K0"/>
<dbReference type="PaxDb" id="9606-ENSP00000418348"/>
<dbReference type="PeptideAtlas" id="Q7Z7K0"/>
<dbReference type="ProteomicsDB" id="69555"/>
<dbReference type="Pumba" id="Q7Z7K0"/>
<dbReference type="Antibodypedia" id="49957">
    <property type="antibodies" value="44 antibodies from 15 providers"/>
</dbReference>
<dbReference type="DNASU" id="152100"/>
<dbReference type="Ensembl" id="ENST00000466830.6">
    <property type="protein sequence ID" value="ENSP00000418348.1"/>
    <property type="gene ID" value="ENSG00000187118.14"/>
</dbReference>
<dbReference type="GeneID" id="152100"/>
<dbReference type="KEGG" id="hsa:152100"/>
<dbReference type="MANE-Select" id="ENST00000466830.6">
    <property type="protein sequence ID" value="ENSP00000418348.1"/>
    <property type="RefSeq nucleotide sequence ID" value="NM_182523.2"/>
    <property type="RefSeq protein sequence ID" value="NP_872329.1"/>
</dbReference>
<dbReference type="UCSC" id="uc003cea.4">
    <property type="organism name" value="human"/>
</dbReference>
<dbReference type="AGR" id="HGNC:28783"/>
<dbReference type="CTD" id="152100"/>
<dbReference type="DisGeNET" id="152100"/>
<dbReference type="GeneCards" id="CMC1"/>
<dbReference type="HGNC" id="HGNC:28783">
    <property type="gene designation" value="CMC1"/>
</dbReference>
<dbReference type="HPA" id="ENSG00000187118">
    <property type="expression patterns" value="Low tissue specificity"/>
</dbReference>
<dbReference type="MIM" id="615166">
    <property type="type" value="gene"/>
</dbReference>
<dbReference type="neXtProt" id="NX_Q7Z7K0"/>
<dbReference type="OpenTargets" id="ENSG00000187118"/>
<dbReference type="PharmGKB" id="PA162382538"/>
<dbReference type="VEuPathDB" id="HostDB:ENSG00000187118"/>
<dbReference type="eggNOG" id="KOG4624">
    <property type="taxonomic scope" value="Eukaryota"/>
</dbReference>
<dbReference type="GeneTree" id="ENSGT00390000018696"/>
<dbReference type="HOGENOM" id="CLU_142621_1_1_1"/>
<dbReference type="InParanoid" id="Q7Z7K0"/>
<dbReference type="OMA" id="CCQETGF"/>
<dbReference type="OrthoDB" id="6224010at2759"/>
<dbReference type="PAN-GO" id="Q7Z7K0">
    <property type="GO annotations" value="1 GO annotation based on evolutionary models"/>
</dbReference>
<dbReference type="PhylomeDB" id="Q7Z7K0"/>
<dbReference type="TreeFam" id="TF314632"/>
<dbReference type="PathwayCommons" id="Q7Z7K0"/>
<dbReference type="Reactome" id="R-HSA-9864848">
    <property type="pathway name" value="Complex IV assembly"/>
</dbReference>
<dbReference type="SignaLink" id="Q7Z7K0"/>
<dbReference type="SIGNOR" id="Q7Z7K0"/>
<dbReference type="BioGRID-ORCS" id="152100">
    <property type="hits" value="150 hits in 1118 CRISPR screens"/>
</dbReference>
<dbReference type="CD-CODE" id="FB4E32DD">
    <property type="entry name" value="Presynaptic clusters and postsynaptic densities"/>
</dbReference>
<dbReference type="ChiTaRS" id="CMC1">
    <property type="organism name" value="human"/>
</dbReference>
<dbReference type="GenomeRNAi" id="152100"/>
<dbReference type="Pharos" id="Q7Z7K0">
    <property type="development level" value="Tdark"/>
</dbReference>
<dbReference type="PRO" id="PR:Q7Z7K0"/>
<dbReference type="Proteomes" id="UP000005640">
    <property type="component" value="Chromosome 3"/>
</dbReference>
<dbReference type="RNAct" id="Q7Z7K0">
    <property type="molecule type" value="protein"/>
</dbReference>
<dbReference type="Bgee" id="ENSG00000187118">
    <property type="expression patterns" value="Expressed in granulocyte and 180 other cell types or tissues"/>
</dbReference>
<dbReference type="ExpressionAtlas" id="Q7Z7K0">
    <property type="expression patterns" value="baseline and differential"/>
</dbReference>
<dbReference type="GO" id="GO:0005759">
    <property type="term" value="C:mitochondrial matrix"/>
    <property type="evidence" value="ECO:0000304"/>
    <property type="project" value="Reactome"/>
</dbReference>
<dbReference type="GO" id="GO:0005739">
    <property type="term" value="C:mitochondrion"/>
    <property type="evidence" value="ECO:0000314"/>
    <property type="project" value="UniProtKB"/>
</dbReference>
<dbReference type="GO" id="GO:0046872">
    <property type="term" value="F:metal ion binding"/>
    <property type="evidence" value="ECO:0007669"/>
    <property type="project" value="UniProtKB-KW"/>
</dbReference>
<dbReference type="InterPro" id="IPR013892">
    <property type="entry name" value="Cyt_c_biogenesis_Cmc1-like"/>
</dbReference>
<dbReference type="PANTHER" id="PTHR22977">
    <property type="entry name" value="COX ASSEMBLY MITOCHONDRIAL PROTEIN"/>
    <property type="match status" value="1"/>
</dbReference>
<dbReference type="PANTHER" id="PTHR22977:SF5">
    <property type="entry name" value="COX ASSEMBLY MITOCHONDRIAL PROTEIN HOMOLOG"/>
    <property type="match status" value="1"/>
</dbReference>
<dbReference type="Pfam" id="PF08583">
    <property type="entry name" value="Cmc1"/>
    <property type="match status" value="1"/>
</dbReference>
<dbReference type="PROSITE" id="PS51808">
    <property type="entry name" value="CHCH"/>
    <property type="match status" value="1"/>
</dbReference>
<name>COXM1_HUMAN</name>
<comment type="function">
    <text evidence="1">Component of the MITRAC (mitochondrial translation regulation assembly intermediate of cytochrome c oxidase complex) complex, that regulates cytochrome c oxidase assembly.</text>
</comment>
<comment type="subunit">
    <text evidence="4">Component of the MITRAC (mitochondrial translation regulation assembly intermediate of cytochrome c oxidase complex) complex, the core components of this complex being COA3/MITRAC12 and COX14.</text>
</comment>
<comment type="subcellular location">
    <subcellularLocation>
        <location evidence="3 5">Mitochondrion</location>
    </subcellularLocation>
    <text>Colocalizes with MT-CO1.</text>
</comment>
<comment type="similarity">
    <text evidence="6">Belongs to the CMC family.</text>
</comment>
<accession>Q7Z7K0</accession>
<accession>Q68DJ7</accession>
<evidence type="ECO:0000250" key="1"/>
<evidence type="ECO:0000255" key="2">
    <source>
        <dbReference type="PROSITE-ProRule" id="PRU01150"/>
    </source>
</evidence>
<evidence type="ECO:0000269" key="3">
    <source>
    </source>
</evidence>
<evidence type="ECO:0000269" key="4">
    <source>
    </source>
</evidence>
<evidence type="ECO:0000269" key="5">
    <source>
    </source>
</evidence>
<evidence type="ECO:0000305" key="6"/>
<evidence type="ECO:0000305" key="7">
    <source>
    </source>
</evidence>
<evidence type="ECO:0007744" key="8">
    <source>
    </source>
</evidence>
<evidence type="ECO:0007744" key="9">
    <source>
    </source>
</evidence>
<gene>
    <name type="primary">CMC1</name>
    <name type="synonym">C3orf68</name>
</gene>
<reference key="1">
    <citation type="journal article" date="2007" name="BMC Genomics">
        <title>The full-ORF clone resource of the German cDNA consortium.</title>
        <authorList>
            <person name="Bechtel S."/>
            <person name="Rosenfelder H."/>
            <person name="Duda A."/>
            <person name="Schmidt C.P."/>
            <person name="Ernst U."/>
            <person name="Wellenreuther R."/>
            <person name="Mehrle A."/>
            <person name="Schuster C."/>
            <person name="Bahr A."/>
            <person name="Bloecker H."/>
            <person name="Heubner D."/>
            <person name="Hoerlein A."/>
            <person name="Michel G."/>
            <person name="Wedler H."/>
            <person name="Koehrer K."/>
            <person name="Ottenwaelder B."/>
            <person name="Poustka A."/>
            <person name="Wiemann S."/>
            <person name="Schupp I."/>
        </authorList>
    </citation>
    <scope>NUCLEOTIDE SEQUENCE [LARGE SCALE MRNA]</scope>
    <source>
        <tissue>Liver</tissue>
    </source>
</reference>
<reference key="2">
    <citation type="submission" date="2005-07" db="EMBL/GenBank/DDBJ databases">
        <authorList>
            <person name="Mural R.J."/>
            <person name="Istrail S."/>
            <person name="Sutton G.G."/>
            <person name="Florea L."/>
            <person name="Halpern A.L."/>
            <person name="Mobarry C.M."/>
            <person name="Lippert R."/>
            <person name="Walenz B."/>
            <person name="Shatkay H."/>
            <person name="Dew I."/>
            <person name="Miller J.R."/>
            <person name="Flanigan M.J."/>
            <person name="Edwards N.J."/>
            <person name="Bolanos R."/>
            <person name="Fasulo D."/>
            <person name="Halldorsson B.V."/>
            <person name="Hannenhalli S."/>
            <person name="Turner R."/>
            <person name="Yooseph S."/>
            <person name="Lu F."/>
            <person name="Nusskern D.R."/>
            <person name="Shue B.C."/>
            <person name="Zheng X.H."/>
            <person name="Zhong F."/>
            <person name="Delcher A.L."/>
            <person name="Huson D.H."/>
            <person name="Kravitz S.A."/>
            <person name="Mouchard L."/>
            <person name="Reinert K."/>
            <person name="Remington K.A."/>
            <person name="Clark A.G."/>
            <person name="Waterman M.S."/>
            <person name="Eichler E.E."/>
            <person name="Adams M.D."/>
            <person name="Hunkapiller M.W."/>
            <person name="Myers E.W."/>
            <person name="Venter J.C."/>
        </authorList>
    </citation>
    <scope>NUCLEOTIDE SEQUENCE [LARGE SCALE GENOMIC DNA]</scope>
</reference>
<reference key="3">
    <citation type="journal article" date="2004" name="Genome Res.">
        <title>The status, quality, and expansion of the NIH full-length cDNA project: the Mammalian Gene Collection (MGC).</title>
        <authorList>
            <consortium name="The MGC Project Team"/>
        </authorList>
    </citation>
    <scope>NUCLEOTIDE SEQUENCE [LARGE SCALE MRNA]</scope>
    <source>
        <tissue>Skin</tissue>
    </source>
</reference>
<reference key="4">
    <citation type="journal article" date="2008" name="Mol. Cell. Biol.">
        <title>Cmc1p is a conserved mitochondrial twin CX(9)C protein involved in cytochrome c oxidase biogenesis.</title>
        <authorList>
            <person name="Horn D."/>
            <person name="Al-Ali H."/>
            <person name="Barrientos A."/>
        </authorList>
    </citation>
    <scope>SUBCELLULAR LOCATION</scope>
</reference>
<reference key="5">
    <citation type="journal article" date="2009" name="Anal. Chem.">
        <title>Lys-N and trypsin cover complementary parts of the phosphoproteome in a refined SCX-based approach.</title>
        <authorList>
            <person name="Gauci S."/>
            <person name="Helbig A.O."/>
            <person name="Slijper M."/>
            <person name="Krijgsveld J."/>
            <person name="Heck A.J."/>
            <person name="Mohammed S."/>
        </authorList>
    </citation>
    <scope>ACETYLATION [LARGE SCALE ANALYSIS] AT ALA-2</scope>
    <scope>CLEAVAGE OF INITIATOR METHIONINE [LARGE SCALE ANALYSIS]</scope>
    <scope>IDENTIFICATION BY MASS SPECTROMETRY [LARGE SCALE ANALYSIS]</scope>
</reference>
<reference key="6">
    <citation type="journal article" date="2011" name="BMC Syst. Biol.">
        <title>Initial characterization of the human central proteome.</title>
        <authorList>
            <person name="Burkard T.R."/>
            <person name="Planyavsky M."/>
            <person name="Kaupe I."/>
            <person name="Breitwieser F.P."/>
            <person name="Buerckstuemmer T."/>
            <person name="Bennett K.L."/>
            <person name="Superti-Furga G."/>
            <person name="Colinge J."/>
        </authorList>
    </citation>
    <scope>IDENTIFICATION BY MASS SPECTROMETRY [LARGE SCALE ANALYSIS]</scope>
</reference>
<reference key="7">
    <citation type="journal article" date="2012" name="Cell">
        <title>MITRAC links mitochondrial protein translocation to respiratory-chain assembly and translational regulation.</title>
        <authorList>
            <person name="Mick D.U."/>
            <person name="Dennerlein S."/>
            <person name="Wiese H."/>
            <person name="Reinhold R."/>
            <person name="Pacheu-Grau D."/>
            <person name="Lorenzi I."/>
            <person name="Sasarman F."/>
            <person name="Weraarpachai W."/>
            <person name="Shoubridge E.A."/>
            <person name="Warscheid B."/>
            <person name="Rehling P."/>
        </authorList>
    </citation>
    <scope>IDENTIFICATION IN SOME MITRAC COMPLEX</scope>
</reference>
<reference key="8">
    <citation type="journal article" date="2013" name="Mol. Biol. Cell">
        <title>Protein import and oxidative folding in the mitochondrial intermembrane space of intact mammalian cells.</title>
        <authorList>
            <person name="Fischer M."/>
            <person name="Horn S."/>
            <person name="Belkacemi A."/>
            <person name="Kojer K."/>
            <person name="Petrungaro C."/>
            <person name="Habich M."/>
            <person name="Ali M."/>
            <person name="Kuettner V."/>
            <person name="Bien M."/>
            <person name="Kauff F."/>
            <person name="Dengjel J."/>
            <person name="Herrmann J.M."/>
            <person name="Riemer J."/>
        </authorList>
    </citation>
    <scope>SUBCELLULAR LOCATION</scope>
    <scope>DISULFIDE BONDS</scope>
</reference>
<reference key="9">
    <citation type="journal article" date="2015" name="Proteomics">
        <title>N-terminome analysis of the human mitochondrial proteome.</title>
        <authorList>
            <person name="Vaca Jacome A.S."/>
            <person name="Rabilloud T."/>
            <person name="Schaeffer-Reiss C."/>
            <person name="Rompais M."/>
            <person name="Ayoub D."/>
            <person name="Lane L."/>
            <person name="Bairoch A."/>
            <person name="Van Dorsselaer A."/>
            <person name="Carapito C."/>
        </authorList>
    </citation>
    <scope>ACETYLATION [LARGE SCALE ANALYSIS] AT ALA-2</scope>
    <scope>CLEAVAGE OF INITIATOR METHIONINE [LARGE SCALE ANALYSIS]</scope>
    <scope>IDENTIFICATION BY MASS SPECTROMETRY [LARGE SCALE ANALYSIS]</scope>
</reference>
<sequence length="106" mass="12490">MALDPADQHLRHVEKDVLIPKIMREKAKERCSEQVQDFTKCCKNSGVLMVVKCRKENSALKECLTAYYNDPAFYEECKMEYLKEREEFRKTGIPTKKRLQKLPTSM</sequence>
<organism>
    <name type="scientific">Homo sapiens</name>
    <name type="common">Human</name>
    <dbReference type="NCBI Taxonomy" id="9606"/>
    <lineage>
        <taxon>Eukaryota</taxon>
        <taxon>Metazoa</taxon>
        <taxon>Chordata</taxon>
        <taxon>Craniata</taxon>
        <taxon>Vertebrata</taxon>
        <taxon>Euteleostomi</taxon>
        <taxon>Mammalia</taxon>
        <taxon>Eutheria</taxon>
        <taxon>Euarchontoglires</taxon>
        <taxon>Primates</taxon>
        <taxon>Haplorrhini</taxon>
        <taxon>Catarrhini</taxon>
        <taxon>Hominidae</taxon>
        <taxon>Homo</taxon>
    </lineage>
</organism>
<feature type="initiator methionine" description="Removed" evidence="8 9">
    <location>
        <position position="1"/>
    </location>
</feature>
<feature type="chain" id="PRO_0000317185" description="COX assembly mitochondrial protein homolog">
    <location>
        <begin position="2"/>
        <end position="106"/>
    </location>
</feature>
<feature type="domain" description="CHCH" evidence="2">
    <location>
        <begin position="28"/>
        <end position="71"/>
    </location>
</feature>
<feature type="short sequence motif" description="Cx9C motif 1" evidence="2">
    <location>
        <begin position="31"/>
        <end position="41"/>
    </location>
</feature>
<feature type="short sequence motif" description="Cx9C motif 2" evidence="2">
    <location>
        <begin position="53"/>
        <end position="63"/>
    </location>
</feature>
<feature type="modified residue" description="N-acetylalanine" evidence="8 9">
    <location>
        <position position="2"/>
    </location>
</feature>
<feature type="disulfide bond" evidence="2 7">
    <location>
        <begin position="31"/>
        <end position="63"/>
    </location>
</feature>
<feature type="disulfide bond" evidence="2 7">
    <location>
        <begin position="41"/>
        <end position="53"/>
    </location>
</feature>
<feature type="sequence conflict" description="In Ref. 1; CAH18223." evidence="6" ref="1">
    <location>
        <position position="68"/>
    </location>
</feature>
<proteinExistence type="evidence at protein level"/>
<keyword id="KW-0007">Acetylation</keyword>
<keyword id="KW-0186">Copper</keyword>
<keyword id="KW-1015">Disulfide bond</keyword>
<keyword id="KW-0479">Metal-binding</keyword>
<keyword id="KW-0496">Mitochondrion</keyword>
<keyword id="KW-1267">Proteomics identification</keyword>
<keyword id="KW-1185">Reference proteome</keyword>